<accession>Q65TY2</accession>
<name>DAPB_MANSM</name>
<feature type="chain" id="PRO_0000228361" description="4-hydroxy-tetrahydrodipicolinate reductase">
    <location>
        <begin position="1"/>
        <end position="270"/>
    </location>
</feature>
<feature type="active site" description="Proton donor/acceptor" evidence="1">
    <location>
        <position position="156"/>
    </location>
</feature>
<feature type="active site" description="Proton donor" evidence="1">
    <location>
        <position position="160"/>
    </location>
</feature>
<feature type="binding site" evidence="1">
    <location>
        <begin position="9"/>
        <end position="14"/>
    </location>
    <ligand>
        <name>NAD(+)</name>
        <dbReference type="ChEBI" id="CHEBI:57540"/>
    </ligand>
</feature>
<feature type="binding site" evidence="1">
    <location>
        <position position="35"/>
    </location>
    <ligand>
        <name>NAD(+)</name>
        <dbReference type="ChEBI" id="CHEBI:57540"/>
    </ligand>
</feature>
<feature type="binding site" evidence="1">
    <location>
        <position position="36"/>
    </location>
    <ligand>
        <name>NADP(+)</name>
        <dbReference type="ChEBI" id="CHEBI:58349"/>
    </ligand>
</feature>
<feature type="binding site" evidence="1">
    <location>
        <begin position="99"/>
        <end position="101"/>
    </location>
    <ligand>
        <name>NAD(+)</name>
        <dbReference type="ChEBI" id="CHEBI:57540"/>
    </ligand>
</feature>
<feature type="binding site" evidence="1">
    <location>
        <begin position="123"/>
        <end position="126"/>
    </location>
    <ligand>
        <name>NAD(+)</name>
        <dbReference type="ChEBI" id="CHEBI:57540"/>
    </ligand>
</feature>
<feature type="binding site" evidence="1">
    <location>
        <position position="157"/>
    </location>
    <ligand>
        <name>(S)-2,3,4,5-tetrahydrodipicolinate</name>
        <dbReference type="ChEBI" id="CHEBI:16845"/>
    </ligand>
</feature>
<feature type="binding site" evidence="1">
    <location>
        <begin position="166"/>
        <end position="167"/>
    </location>
    <ligand>
        <name>(S)-2,3,4,5-tetrahydrodipicolinate</name>
        <dbReference type="ChEBI" id="CHEBI:16845"/>
    </ligand>
</feature>
<proteinExistence type="inferred from homology"/>
<dbReference type="EC" id="1.17.1.8" evidence="1"/>
<dbReference type="EMBL" id="AE016827">
    <property type="protein sequence ID" value="AAU37578.1"/>
    <property type="molecule type" value="Genomic_DNA"/>
</dbReference>
<dbReference type="RefSeq" id="WP_011200148.1">
    <property type="nucleotide sequence ID" value="NC_006300.1"/>
</dbReference>
<dbReference type="SMR" id="Q65TY2"/>
<dbReference type="STRING" id="221988.MS0971"/>
<dbReference type="KEGG" id="msu:MS0971"/>
<dbReference type="eggNOG" id="COG0289">
    <property type="taxonomic scope" value="Bacteria"/>
</dbReference>
<dbReference type="HOGENOM" id="CLU_047479_2_1_6"/>
<dbReference type="OrthoDB" id="9790352at2"/>
<dbReference type="UniPathway" id="UPA00034">
    <property type="reaction ID" value="UER00018"/>
</dbReference>
<dbReference type="Proteomes" id="UP000000607">
    <property type="component" value="Chromosome"/>
</dbReference>
<dbReference type="GO" id="GO:0005829">
    <property type="term" value="C:cytosol"/>
    <property type="evidence" value="ECO:0007669"/>
    <property type="project" value="TreeGrafter"/>
</dbReference>
<dbReference type="GO" id="GO:0008839">
    <property type="term" value="F:4-hydroxy-tetrahydrodipicolinate reductase"/>
    <property type="evidence" value="ECO:0007669"/>
    <property type="project" value="UniProtKB-EC"/>
</dbReference>
<dbReference type="GO" id="GO:0051287">
    <property type="term" value="F:NAD binding"/>
    <property type="evidence" value="ECO:0007669"/>
    <property type="project" value="UniProtKB-UniRule"/>
</dbReference>
<dbReference type="GO" id="GO:0050661">
    <property type="term" value="F:NADP binding"/>
    <property type="evidence" value="ECO:0007669"/>
    <property type="project" value="UniProtKB-UniRule"/>
</dbReference>
<dbReference type="GO" id="GO:0016726">
    <property type="term" value="F:oxidoreductase activity, acting on CH or CH2 groups, NAD or NADP as acceptor"/>
    <property type="evidence" value="ECO:0007669"/>
    <property type="project" value="UniProtKB-UniRule"/>
</dbReference>
<dbReference type="GO" id="GO:0019877">
    <property type="term" value="P:diaminopimelate biosynthetic process"/>
    <property type="evidence" value="ECO:0007669"/>
    <property type="project" value="UniProtKB-UniRule"/>
</dbReference>
<dbReference type="GO" id="GO:0009089">
    <property type="term" value="P:lysine biosynthetic process via diaminopimelate"/>
    <property type="evidence" value="ECO:0007669"/>
    <property type="project" value="UniProtKB-UniRule"/>
</dbReference>
<dbReference type="CDD" id="cd02274">
    <property type="entry name" value="DHDPR_N"/>
    <property type="match status" value="1"/>
</dbReference>
<dbReference type="FunFam" id="3.30.360.10:FF:000004">
    <property type="entry name" value="4-hydroxy-tetrahydrodipicolinate reductase"/>
    <property type="match status" value="1"/>
</dbReference>
<dbReference type="FunFam" id="3.40.50.720:FF:000048">
    <property type="entry name" value="4-hydroxy-tetrahydrodipicolinate reductase"/>
    <property type="match status" value="1"/>
</dbReference>
<dbReference type="Gene3D" id="3.30.360.10">
    <property type="entry name" value="Dihydrodipicolinate Reductase, domain 2"/>
    <property type="match status" value="1"/>
</dbReference>
<dbReference type="Gene3D" id="3.40.50.720">
    <property type="entry name" value="NAD(P)-binding Rossmann-like Domain"/>
    <property type="match status" value="1"/>
</dbReference>
<dbReference type="HAMAP" id="MF_00102">
    <property type="entry name" value="DapB"/>
    <property type="match status" value="1"/>
</dbReference>
<dbReference type="InterPro" id="IPR022663">
    <property type="entry name" value="DapB_C"/>
</dbReference>
<dbReference type="InterPro" id="IPR000846">
    <property type="entry name" value="DapB_N"/>
</dbReference>
<dbReference type="InterPro" id="IPR022664">
    <property type="entry name" value="DapB_N_CS"/>
</dbReference>
<dbReference type="InterPro" id="IPR023940">
    <property type="entry name" value="DHDPR_bac"/>
</dbReference>
<dbReference type="InterPro" id="IPR036291">
    <property type="entry name" value="NAD(P)-bd_dom_sf"/>
</dbReference>
<dbReference type="NCBIfam" id="TIGR00036">
    <property type="entry name" value="dapB"/>
    <property type="match status" value="1"/>
</dbReference>
<dbReference type="PANTHER" id="PTHR20836:SF0">
    <property type="entry name" value="4-HYDROXY-TETRAHYDRODIPICOLINATE REDUCTASE 1, CHLOROPLASTIC-RELATED"/>
    <property type="match status" value="1"/>
</dbReference>
<dbReference type="PANTHER" id="PTHR20836">
    <property type="entry name" value="DIHYDRODIPICOLINATE REDUCTASE"/>
    <property type="match status" value="1"/>
</dbReference>
<dbReference type="Pfam" id="PF05173">
    <property type="entry name" value="DapB_C"/>
    <property type="match status" value="1"/>
</dbReference>
<dbReference type="Pfam" id="PF01113">
    <property type="entry name" value="DapB_N"/>
    <property type="match status" value="1"/>
</dbReference>
<dbReference type="PIRSF" id="PIRSF000161">
    <property type="entry name" value="DHPR"/>
    <property type="match status" value="1"/>
</dbReference>
<dbReference type="SUPFAM" id="SSF55347">
    <property type="entry name" value="Glyceraldehyde-3-phosphate dehydrogenase-like, C-terminal domain"/>
    <property type="match status" value="1"/>
</dbReference>
<dbReference type="SUPFAM" id="SSF51735">
    <property type="entry name" value="NAD(P)-binding Rossmann-fold domains"/>
    <property type="match status" value="1"/>
</dbReference>
<dbReference type="PROSITE" id="PS01298">
    <property type="entry name" value="DAPB"/>
    <property type="match status" value="1"/>
</dbReference>
<keyword id="KW-0028">Amino-acid biosynthesis</keyword>
<keyword id="KW-0963">Cytoplasm</keyword>
<keyword id="KW-0220">Diaminopimelate biosynthesis</keyword>
<keyword id="KW-0457">Lysine biosynthesis</keyword>
<keyword id="KW-0520">NAD</keyword>
<keyword id="KW-0521">NADP</keyword>
<keyword id="KW-0560">Oxidoreductase</keyword>
<organism>
    <name type="scientific">Mannheimia succiniciproducens (strain KCTC 0769BP / MBEL55E)</name>
    <dbReference type="NCBI Taxonomy" id="221988"/>
    <lineage>
        <taxon>Bacteria</taxon>
        <taxon>Pseudomonadati</taxon>
        <taxon>Pseudomonadota</taxon>
        <taxon>Gammaproteobacteria</taxon>
        <taxon>Pasteurellales</taxon>
        <taxon>Pasteurellaceae</taxon>
        <taxon>Basfia</taxon>
    </lineage>
</organism>
<evidence type="ECO:0000255" key="1">
    <source>
        <dbReference type="HAMAP-Rule" id="MF_00102"/>
    </source>
</evidence>
<evidence type="ECO:0000305" key="2"/>
<sequence length="270" mass="28835">MTLKLAIVGAGGRMGRQLIQAVQAAEGVELGAAFERKGSSLIGADAGELAGLGELGIKVAEDLAAEKDKFDIIIDFTRPEGSLEHIKFCVANNKKLILGTTGFDDAGKQAIGKAAEKTAIVFASNYSVGVNLVFKLLEKAAKVMGDYSDIEIIEAHHRHKVDAPSGTALSMGEHIAKTLGRDLKVNGVFSREGITGERKRTDIGFSTIRAADVVGEHTVWFADIGERVEISHKASSRMTFANGAVRAAKWLANKQIGLFDMTDVLDLNNL</sequence>
<gene>
    <name evidence="1" type="primary">dapB</name>
    <name type="ordered locus">MS0971</name>
</gene>
<protein>
    <recommendedName>
        <fullName evidence="1">4-hydroxy-tetrahydrodipicolinate reductase</fullName>
        <shortName evidence="1">HTPA reductase</shortName>
        <ecNumber evidence="1">1.17.1.8</ecNumber>
    </recommendedName>
</protein>
<reference key="1">
    <citation type="journal article" date="2004" name="Nat. Biotechnol.">
        <title>The genome sequence of the capnophilic rumen bacterium Mannheimia succiniciproducens.</title>
        <authorList>
            <person name="Hong S.H."/>
            <person name="Kim J.S."/>
            <person name="Lee S.Y."/>
            <person name="In Y.H."/>
            <person name="Choi S.S."/>
            <person name="Rih J.-K."/>
            <person name="Kim C.H."/>
            <person name="Jeong H."/>
            <person name="Hur C.G."/>
            <person name="Kim J.J."/>
        </authorList>
    </citation>
    <scope>NUCLEOTIDE SEQUENCE [LARGE SCALE GENOMIC DNA]</scope>
    <source>
        <strain>KCTC 0769BP / MBEL55E</strain>
    </source>
</reference>
<comment type="function">
    <text evidence="1">Catalyzes the conversion of 4-hydroxy-tetrahydrodipicolinate (HTPA) to tetrahydrodipicolinate.</text>
</comment>
<comment type="catalytic activity">
    <reaction evidence="1">
        <text>(S)-2,3,4,5-tetrahydrodipicolinate + NAD(+) + H2O = (2S,4S)-4-hydroxy-2,3,4,5-tetrahydrodipicolinate + NADH + H(+)</text>
        <dbReference type="Rhea" id="RHEA:35323"/>
        <dbReference type="ChEBI" id="CHEBI:15377"/>
        <dbReference type="ChEBI" id="CHEBI:15378"/>
        <dbReference type="ChEBI" id="CHEBI:16845"/>
        <dbReference type="ChEBI" id="CHEBI:57540"/>
        <dbReference type="ChEBI" id="CHEBI:57945"/>
        <dbReference type="ChEBI" id="CHEBI:67139"/>
        <dbReference type="EC" id="1.17.1.8"/>
    </reaction>
</comment>
<comment type="catalytic activity">
    <reaction evidence="1">
        <text>(S)-2,3,4,5-tetrahydrodipicolinate + NADP(+) + H2O = (2S,4S)-4-hydroxy-2,3,4,5-tetrahydrodipicolinate + NADPH + H(+)</text>
        <dbReference type="Rhea" id="RHEA:35331"/>
        <dbReference type="ChEBI" id="CHEBI:15377"/>
        <dbReference type="ChEBI" id="CHEBI:15378"/>
        <dbReference type="ChEBI" id="CHEBI:16845"/>
        <dbReference type="ChEBI" id="CHEBI:57783"/>
        <dbReference type="ChEBI" id="CHEBI:58349"/>
        <dbReference type="ChEBI" id="CHEBI:67139"/>
        <dbReference type="EC" id="1.17.1.8"/>
    </reaction>
</comment>
<comment type="pathway">
    <text evidence="1">Amino-acid biosynthesis; L-lysine biosynthesis via DAP pathway; (S)-tetrahydrodipicolinate from L-aspartate: step 4/4.</text>
</comment>
<comment type="subcellular location">
    <subcellularLocation>
        <location evidence="1">Cytoplasm</location>
    </subcellularLocation>
</comment>
<comment type="similarity">
    <text evidence="1">Belongs to the DapB family.</text>
</comment>
<comment type="caution">
    <text evidence="2">Was originally thought to be a dihydrodipicolinate reductase (DHDPR), catalyzing the conversion of dihydrodipicolinate to tetrahydrodipicolinate. However, it was shown in E.coli that the substrate of the enzymatic reaction is not dihydrodipicolinate (DHDP) but in fact (2S,4S)-4-hydroxy-2,3,4,5-tetrahydrodipicolinic acid (HTPA), the product released by the DapA-catalyzed reaction.</text>
</comment>